<sequence>MKTSLFKSLYFQVLTAIAIGILLGHYYPELGAQMKPLGDAFVKLIKMIIAPVIFCTVVTGIAGMESMKAVGRTGAVALLYFEIVSTIALIIGLIIVNVVQPGAGMNVDPATLDAQAVAVYAAQAKEQGIIAFLMDIIPGSVIGAFASGNILQVLLFAVLFGFALHRLGSKGQLIFNVIESFSQVIFGIINMIMRLAPIGAFGAMAFTIGKYGVGSLVQLGQLIICFYITCILFVVVVLGTIARVTGFSIFKFIRYIREELLIVLGTSSSESALPRMLDKMEKLGCRKSVVGLVIPTGYSFNLDGTSIYLTMAAVFIAQATNSHMDIFHQITLLVVLLLSSKGAAGVTGSGFIVLAATISAVGHLPVAGLALILGIDRFMSEARALTNLVGNGVATVVVAKWVKELDRQKLDDVLNNRAPDGKTHEISS</sequence>
<dbReference type="EMBL" id="CP000880">
    <property type="protein sequence ID" value="ABX23813.1"/>
    <property type="molecule type" value="Genomic_DNA"/>
</dbReference>
<dbReference type="SMR" id="A9MLJ4"/>
<dbReference type="STRING" id="41514.SARI_04020"/>
<dbReference type="KEGG" id="ses:SARI_04020"/>
<dbReference type="HOGENOM" id="CLU_019375_7_0_6"/>
<dbReference type="Proteomes" id="UP000002084">
    <property type="component" value="Chromosome"/>
</dbReference>
<dbReference type="GO" id="GO:0005886">
    <property type="term" value="C:plasma membrane"/>
    <property type="evidence" value="ECO:0007669"/>
    <property type="project" value="UniProtKB-SubCell"/>
</dbReference>
<dbReference type="GO" id="GO:0015138">
    <property type="term" value="F:fumarate transmembrane transporter activity"/>
    <property type="evidence" value="ECO:0007669"/>
    <property type="project" value="TreeGrafter"/>
</dbReference>
<dbReference type="GO" id="GO:0015366">
    <property type="term" value="F:malate:proton symporter activity"/>
    <property type="evidence" value="ECO:0007669"/>
    <property type="project" value="TreeGrafter"/>
</dbReference>
<dbReference type="GO" id="GO:0015141">
    <property type="term" value="F:succinate transmembrane transporter activity"/>
    <property type="evidence" value="ECO:0007669"/>
    <property type="project" value="TreeGrafter"/>
</dbReference>
<dbReference type="GO" id="GO:0070778">
    <property type="term" value="P:L-aspartate transmembrane transport"/>
    <property type="evidence" value="ECO:0007669"/>
    <property type="project" value="TreeGrafter"/>
</dbReference>
<dbReference type="FunFam" id="1.10.3860.10:FF:000001">
    <property type="entry name" value="C4-dicarboxylate transport protein"/>
    <property type="match status" value="1"/>
</dbReference>
<dbReference type="Gene3D" id="1.10.3860.10">
    <property type="entry name" value="Sodium:dicarboxylate symporter"/>
    <property type="match status" value="1"/>
</dbReference>
<dbReference type="HAMAP" id="MF_01300">
    <property type="entry name" value="C4_dicarb_transport"/>
    <property type="match status" value="1"/>
</dbReference>
<dbReference type="InterPro" id="IPR023954">
    <property type="entry name" value="C4_dicarb_transport"/>
</dbReference>
<dbReference type="InterPro" id="IPR001991">
    <property type="entry name" value="Na-dicarboxylate_symporter"/>
</dbReference>
<dbReference type="InterPro" id="IPR018107">
    <property type="entry name" value="Na-dicarboxylate_symporter_CS"/>
</dbReference>
<dbReference type="InterPro" id="IPR036458">
    <property type="entry name" value="Na:dicarbo_symporter_sf"/>
</dbReference>
<dbReference type="NCBIfam" id="NF002461">
    <property type="entry name" value="PRK01663.1"/>
    <property type="match status" value="1"/>
</dbReference>
<dbReference type="NCBIfam" id="NF009587">
    <property type="entry name" value="PRK13027.1"/>
    <property type="match status" value="1"/>
</dbReference>
<dbReference type="PANTHER" id="PTHR42865:SF1">
    <property type="entry name" value="AEROBIC C4-DICARBOXYLATE TRANSPORT PROTEIN"/>
    <property type="match status" value="1"/>
</dbReference>
<dbReference type="PANTHER" id="PTHR42865">
    <property type="entry name" value="PROTON/GLUTAMATE-ASPARTATE SYMPORTER"/>
    <property type="match status" value="1"/>
</dbReference>
<dbReference type="Pfam" id="PF00375">
    <property type="entry name" value="SDF"/>
    <property type="match status" value="1"/>
</dbReference>
<dbReference type="PRINTS" id="PR00173">
    <property type="entry name" value="EDTRNSPORT"/>
</dbReference>
<dbReference type="SUPFAM" id="SSF118215">
    <property type="entry name" value="Proton glutamate symport protein"/>
    <property type="match status" value="1"/>
</dbReference>
<dbReference type="PROSITE" id="PS00713">
    <property type="entry name" value="NA_DICARBOXYL_SYMP_1"/>
    <property type="match status" value="1"/>
</dbReference>
<dbReference type="PROSITE" id="PS00714">
    <property type="entry name" value="NA_DICARBOXYL_SYMP_2"/>
    <property type="match status" value="1"/>
</dbReference>
<comment type="function">
    <text evidence="1">Responsible for the transport of dicarboxylates such as succinate, fumarate, and malate from the periplasm across the membrane.</text>
</comment>
<comment type="subcellular location">
    <subcellularLocation>
        <location evidence="1">Cell inner membrane</location>
        <topology evidence="1">Multi-pass membrane protein</topology>
    </subcellularLocation>
</comment>
<comment type="similarity">
    <text evidence="1">Belongs to the dicarboxylate/amino acid:cation symporter (DAACS) (TC 2.A.23) family.</text>
</comment>
<keyword id="KW-0997">Cell inner membrane</keyword>
<keyword id="KW-1003">Cell membrane</keyword>
<keyword id="KW-0472">Membrane</keyword>
<keyword id="KW-1185">Reference proteome</keyword>
<keyword id="KW-0769">Symport</keyword>
<keyword id="KW-0812">Transmembrane</keyword>
<keyword id="KW-1133">Transmembrane helix</keyword>
<keyword id="KW-0813">Transport</keyword>
<evidence type="ECO:0000255" key="1">
    <source>
        <dbReference type="HAMAP-Rule" id="MF_01300"/>
    </source>
</evidence>
<feature type="chain" id="PRO_1000085904" description="C4-dicarboxylate transport protein">
    <location>
        <begin position="1"/>
        <end position="428"/>
    </location>
</feature>
<feature type="transmembrane region" description="Helical" evidence="1">
    <location>
        <begin position="4"/>
        <end position="24"/>
    </location>
</feature>
<feature type="transmembrane region" description="Helical" evidence="1">
    <location>
        <begin position="44"/>
        <end position="64"/>
    </location>
</feature>
<feature type="transmembrane region" description="Helical" evidence="1">
    <location>
        <begin position="76"/>
        <end position="96"/>
    </location>
</feature>
<feature type="transmembrane region" description="Helical" evidence="1">
    <location>
        <begin position="142"/>
        <end position="162"/>
    </location>
</feature>
<feature type="transmembrane region" description="Helical" evidence="1">
    <location>
        <begin position="184"/>
        <end position="204"/>
    </location>
</feature>
<feature type="transmembrane region" description="Helical" evidence="1">
    <location>
        <begin position="222"/>
        <end position="242"/>
    </location>
</feature>
<feature type="transmembrane region" description="Helical" evidence="1">
    <location>
        <begin position="289"/>
        <end position="309"/>
    </location>
</feature>
<feature type="transmembrane region" description="Helical" evidence="1">
    <location>
        <begin position="326"/>
        <end position="346"/>
    </location>
</feature>
<feature type="transmembrane region" description="Helical" evidence="1">
    <location>
        <begin position="352"/>
        <end position="372"/>
    </location>
</feature>
<name>DCTA_SALAR</name>
<reference key="1">
    <citation type="submission" date="2007-11" db="EMBL/GenBank/DDBJ databases">
        <authorList>
            <consortium name="The Salmonella enterica serovar Arizonae Genome Sequencing Project"/>
            <person name="McClelland M."/>
            <person name="Sanderson E.K."/>
            <person name="Porwollik S."/>
            <person name="Spieth J."/>
            <person name="Clifton W.S."/>
            <person name="Fulton R."/>
            <person name="Chunyan W."/>
            <person name="Wollam A."/>
            <person name="Shah N."/>
            <person name="Pepin K."/>
            <person name="Bhonagiri V."/>
            <person name="Nash W."/>
            <person name="Johnson M."/>
            <person name="Thiruvilangam P."/>
            <person name="Wilson R."/>
        </authorList>
    </citation>
    <scope>NUCLEOTIDE SEQUENCE [LARGE SCALE GENOMIC DNA]</scope>
    <source>
        <strain>ATCC BAA-731 / CDC346-86 / RSK2980</strain>
    </source>
</reference>
<protein>
    <recommendedName>
        <fullName evidence="1">C4-dicarboxylate transport protein</fullName>
    </recommendedName>
</protein>
<organism>
    <name type="scientific">Salmonella arizonae (strain ATCC BAA-731 / CDC346-86 / RSK2980)</name>
    <dbReference type="NCBI Taxonomy" id="41514"/>
    <lineage>
        <taxon>Bacteria</taxon>
        <taxon>Pseudomonadati</taxon>
        <taxon>Pseudomonadota</taxon>
        <taxon>Gammaproteobacteria</taxon>
        <taxon>Enterobacterales</taxon>
        <taxon>Enterobacteriaceae</taxon>
        <taxon>Salmonella</taxon>
    </lineage>
</organism>
<accession>A9MLJ4</accession>
<proteinExistence type="inferred from homology"/>
<gene>
    <name evidence="1" type="primary">dctA</name>
    <name type="ordered locus">SARI_04020</name>
</gene>